<name>SYL_ARCFU</name>
<keyword id="KW-0030">Aminoacyl-tRNA synthetase</keyword>
<keyword id="KW-0067">ATP-binding</keyword>
<keyword id="KW-0963">Cytoplasm</keyword>
<keyword id="KW-0436">Ligase</keyword>
<keyword id="KW-0547">Nucleotide-binding</keyword>
<keyword id="KW-0648">Protein biosynthesis</keyword>
<keyword id="KW-1185">Reference proteome</keyword>
<protein>
    <recommendedName>
        <fullName evidence="1">Leucine--tRNA ligase</fullName>
        <ecNumber evidence="1">6.1.1.4</ecNumber>
    </recommendedName>
    <alternativeName>
        <fullName evidence="1">Leucyl-tRNA synthetase</fullName>
        <shortName evidence="1">LeuRS</shortName>
    </alternativeName>
</protein>
<organism>
    <name type="scientific">Archaeoglobus fulgidus (strain ATCC 49558 / DSM 4304 / JCM 9628 / NBRC 100126 / VC-16)</name>
    <dbReference type="NCBI Taxonomy" id="224325"/>
    <lineage>
        <taxon>Archaea</taxon>
        <taxon>Methanobacteriati</taxon>
        <taxon>Methanobacteriota</taxon>
        <taxon>Archaeoglobi</taxon>
        <taxon>Archaeoglobales</taxon>
        <taxon>Archaeoglobaceae</taxon>
        <taxon>Archaeoglobus</taxon>
    </lineage>
</organism>
<gene>
    <name evidence="1" type="primary">leuS</name>
    <name type="ordered locus">AF_2421</name>
</gene>
<sequence length="932" mass="108628">MSDFRIIEEKWQKAWEKDRIFESDPNEKEKFFLTIPYPYLNGNLHAGHTRTFTIGDAFARYMRMKGYNVLFPLGFHVTGTPIIGLAELIAKRDERTIEVYTKYHDVPLEDLLQLTTPEKIVEYFSREALQALKSIGYSIDWRRVFTTTDEEYQRFIEWQYWKLKELGLIVKGTHPVRYCPHDQNPVEDHDLLAGEEATIVEFTVIKFRLEDGDLIFPCATLRPETVFGVTNIWVKPTTYVIAEVDGEKWFVSKEAYEKLTYTEKKVRLLEEVDASQFFGKYVIVPLVNRKVPILPAEFVDTDNATGVVMSVPAHAPFDLAAIEDLKRDEETLAKYGIDKSVVESIKPIVLIKTDIEGVPAEKLIRELGVKSQKDKELLDKATKTLYKKEYHTGIMLDNTMNYAGMKVSEAKERVHEDLVKLGLGDVFYEFSEKPVICRCGTKCVVKVVRDQWFLNYSNREWKEKVLNHLEKMRIIPDYYKEEFRNKIEWLRDKACARRKGLGTRIPWDKEWLIESLSDSTIYMAYYILAKYINAGLLKAENMTPEFLDYVLLGKGEVGKVAEASKLSVELIQQIRDDFEYWYPVDLRSSGKDLVANHLLFYLFHHVAIFPPDKWPRAIAVNGYVSLEGKKMSKSKGPLLTMKRAVQQYGADVTRLYILHAAEYDSDADWKSREVEGLANHLRRFYNLVKENYLKEVGELTTLDRWLVSRMQRAIKEVREAMDNLQTRRAVNAAFFELMNDVRWYLRRGGENLAIILDDWIKLLAPFAPHICEELWHLKHDSYVSLESYPEYDETRVDEEAERIEEYLRNLVEDIQEIKKFVSDAKEVYIAPAEDWKVKAAKVVAESGDVGEAMKQLMQDEELRKLGKEVSNFVKKIFKDRKKLMLVKEWEVLQQNLKFIENETGLKVILDTQRVPEEKRRQAVPGKPAIYVA</sequence>
<comment type="catalytic activity">
    <reaction evidence="1">
        <text>tRNA(Leu) + L-leucine + ATP = L-leucyl-tRNA(Leu) + AMP + diphosphate</text>
        <dbReference type="Rhea" id="RHEA:11688"/>
        <dbReference type="Rhea" id="RHEA-COMP:9613"/>
        <dbReference type="Rhea" id="RHEA-COMP:9622"/>
        <dbReference type="ChEBI" id="CHEBI:30616"/>
        <dbReference type="ChEBI" id="CHEBI:33019"/>
        <dbReference type="ChEBI" id="CHEBI:57427"/>
        <dbReference type="ChEBI" id="CHEBI:78442"/>
        <dbReference type="ChEBI" id="CHEBI:78494"/>
        <dbReference type="ChEBI" id="CHEBI:456215"/>
        <dbReference type="EC" id="6.1.1.4"/>
    </reaction>
</comment>
<comment type="subcellular location">
    <subcellularLocation>
        <location evidence="1">Cytoplasm</location>
    </subcellularLocation>
</comment>
<comment type="similarity">
    <text evidence="1">Belongs to the class-I aminoacyl-tRNA synthetase family.</text>
</comment>
<reference key="1">
    <citation type="journal article" date="1997" name="Nature">
        <title>The complete genome sequence of the hyperthermophilic, sulphate-reducing archaeon Archaeoglobus fulgidus.</title>
        <authorList>
            <person name="Klenk H.-P."/>
            <person name="Clayton R.A."/>
            <person name="Tomb J.-F."/>
            <person name="White O."/>
            <person name="Nelson K.E."/>
            <person name="Ketchum K.A."/>
            <person name="Dodson R.J."/>
            <person name="Gwinn M.L."/>
            <person name="Hickey E.K."/>
            <person name="Peterson J.D."/>
            <person name="Richardson D.L."/>
            <person name="Kerlavage A.R."/>
            <person name="Graham D.E."/>
            <person name="Kyrpides N.C."/>
            <person name="Fleischmann R.D."/>
            <person name="Quackenbush J."/>
            <person name="Lee N.H."/>
            <person name="Sutton G.G."/>
            <person name="Gill S.R."/>
            <person name="Kirkness E.F."/>
            <person name="Dougherty B.A."/>
            <person name="McKenney K."/>
            <person name="Adams M.D."/>
            <person name="Loftus B.J."/>
            <person name="Peterson S.N."/>
            <person name="Reich C.I."/>
            <person name="McNeil L.K."/>
            <person name="Badger J.H."/>
            <person name="Glodek A."/>
            <person name="Zhou L."/>
            <person name="Overbeek R."/>
            <person name="Gocayne J.D."/>
            <person name="Weidman J.F."/>
            <person name="McDonald L.A."/>
            <person name="Utterback T.R."/>
            <person name="Cotton M.D."/>
            <person name="Spriggs T."/>
            <person name="Artiach P."/>
            <person name="Kaine B.P."/>
            <person name="Sykes S.M."/>
            <person name="Sadow P.W."/>
            <person name="D'Andrea K.P."/>
            <person name="Bowman C."/>
            <person name="Fujii C."/>
            <person name="Garland S.A."/>
            <person name="Mason T.M."/>
            <person name="Olsen G.J."/>
            <person name="Fraser C.M."/>
            <person name="Smith H.O."/>
            <person name="Woese C.R."/>
            <person name="Venter J.C."/>
        </authorList>
    </citation>
    <scope>NUCLEOTIDE SEQUENCE [LARGE SCALE GENOMIC DNA]</scope>
    <source>
        <strain>ATCC 49558 / DSM 4304 / JCM 9628 / NBRC 100126 / VC-16</strain>
    </source>
</reference>
<accession>O30250</accession>
<dbReference type="EC" id="6.1.1.4" evidence="1"/>
<dbReference type="EMBL" id="AE000782">
    <property type="protein sequence ID" value="AAB91241.1"/>
    <property type="molecule type" value="Genomic_DNA"/>
</dbReference>
<dbReference type="PIR" id="F69552">
    <property type="entry name" value="F69552"/>
</dbReference>
<dbReference type="RefSeq" id="WP_010879908.1">
    <property type="nucleotide sequence ID" value="NC_000917.1"/>
</dbReference>
<dbReference type="SMR" id="O30250"/>
<dbReference type="STRING" id="224325.AF_2421"/>
<dbReference type="PaxDb" id="224325-AF_2421"/>
<dbReference type="EnsemblBacteria" id="AAB91241">
    <property type="protein sequence ID" value="AAB91241"/>
    <property type="gene ID" value="AF_2421"/>
</dbReference>
<dbReference type="GeneID" id="24796145"/>
<dbReference type="KEGG" id="afu:AF_2421"/>
<dbReference type="eggNOG" id="arCOG00809">
    <property type="taxonomic scope" value="Archaea"/>
</dbReference>
<dbReference type="HOGENOM" id="CLU_004174_0_0_2"/>
<dbReference type="OrthoDB" id="23906at2157"/>
<dbReference type="PhylomeDB" id="O30250"/>
<dbReference type="Proteomes" id="UP000002199">
    <property type="component" value="Chromosome"/>
</dbReference>
<dbReference type="GO" id="GO:0005737">
    <property type="term" value="C:cytoplasm"/>
    <property type="evidence" value="ECO:0007669"/>
    <property type="project" value="UniProtKB-SubCell"/>
</dbReference>
<dbReference type="GO" id="GO:0002161">
    <property type="term" value="F:aminoacyl-tRNA deacylase activity"/>
    <property type="evidence" value="ECO:0007669"/>
    <property type="project" value="InterPro"/>
</dbReference>
<dbReference type="GO" id="GO:0005524">
    <property type="term" value="F:ATP binding"/>
    <property type="evidence" value="ECO:0007669"/>
    <property type="project" value="UniProtKB-UniRule"/>
</dbReference>
<dbReference type="GO" id="GO:0004823">
    <property type="term" value="F:leucine-tRNA ligase activity"/>
    <property type="evidence" value="ECO:0007669"/>
    <property type="project" value="UniProtKB-UniRule"/>
</dbReference>
<dbReference type="GO" id="GO:0006429">
    <property type="term" value="P:leucyl-tRNA aminoacylation"/>
    <property type="evidence" value="ECO:0007669"/>
    <property type="project" value="UniProtKB-UniRule"/>
</dbReference>
<dbReference type="CDD" id="cd07959">
    <property type="entry name" value="Anticodon_Ia_Leu_AEc"/>
    <property type="match status" value="1"/>
</dbReference>
<dbReference type="CDD" id="cd00812">
    <property type="entry name" value="LeuRS_core"/>
    <property type="match status" value="1"/>
</dbReference>
<dbReference type="FunFam" id="1.10.730.10:FF:000051">
    <property type="entry name" value="Leucine--tRNA ligase"/>
    <property type="match status" value="1"/>
</dbReference>
<dbReference type="Gene3D" id="3.30.2320.20">
    <property type="entry name" value="Class I aminoacyl-tRNA synthetases (RS)"/>
    <property type="match status" value="1"/>
</dbReference>
<dbReference type="Gene3D" id="3.40.50.620">
    <property type="entry name" value="HUPs"/>
    <property type="match status" value="1"/>
</dbReference>
<dbReference type="Gene3D" id="1.10.730.10">
    <property type="entry name" value="Isoleucyl-tRNA Synthetase, Domain 1"/>
    <property type="match status" value="1"/>
</dbReference>
<dbReference type="Gene3D" id="1.10.10.720">
    <property type="entry name" value="leucyl-tRNA synthetase"/>
    <property type="match status" value="1"/>
</dbReference>
<dbReference type="Gene3D" id="3.90.740.10">
    <property type="entry name" value="Valyl/Leucyl/Isoleucyl-tRNA synthetase, editing domain"/>
    <property type="match status" value="1"/>
</dbReference>
<dbReference type="HAMAP" id="MF_00049_A">
    <property type="entry name" value="Leu_tRNA_synth_A"/>
    <property type="match status" value="1"/>
</dbReference>
<dbReference type="InterPro" id="IPR001412">
    <property type="entry name" value="aa-tRNA-synth_I_CS"/>
</dbReference>
<dbReference type="InterPro" id="IPR002300">
    <property type="entry name" value="aa-tRNA-synth_Ia"/>
</dbReference>
<dbReference type="InterPro" id="IPR020791">
    <property type="entry name" value="Leu-tRNA-lgase_arc"/>
</dbReference>
<dbReference type="InterPro" id="IPR004493">
    <property type="entry name" value="Leu-tRNA-synth_Ia_arc/euk"/>
</dbReference>
<dbReference type="InterPro" id="IPR013155">
    <property type="entry name" value="M/V/L/I-tRNA-synth_anticd-bd"/>
</dbReference>
<dbReference type="InterPro" id="IPR014729">
    <property type="entry name" value="Rossmann-like_a/b/a_fold"/>
</dbReference>
<dbReference type="InterPro" id="IPR009080">
    <property type="entry name" value="tRNAsynth_Ia_anticodon-bd"/>
</dbReference>
<dbReference type="InterPro" id="IPR009008">
    <property type="entry name" value="Val/Leu/Ile-tRNA-synth_edit"/>
</dbReference>
<dbReference type="NCBIfam" id="TIGR00395">
    <property type="entry name" value="leuS_arch"/>
    <property type="match status" value="1"/>
</dbReference>
<dbReference type="NCBIfam" id="NF008957">
    <property type="entry name" value="PRK12300.1"/>
    <property type="match status" value="1"/>
</dbReference>
<dbReference type="PANTHER" id="PTHR45794:SF1">
    <property type="entry name" value="LEUCINE--TRNA LIGASE, CYTOPLASMIC"/>
    <property type="match status" value="1"/>
</dbReference>
<dbReference type="PANTHER" id="PTHR45794">
    <property type="entry name" value="LEUCYL-TRNA SYNTHETASE"/>
    <property type="match status" value="1"/>
</dbReference>
<dbReference type="Pfam" id="PF08264">
    <property type="entry name" value="Anticodon_1"/>
    <property type="match status" value="1"/>
</dbReference>
<dbReference type="Pfam" id="PF00133">
    <property type="entry name" value="tRNA-synt_1"/>
    <property type="match status" value="1"/>
</dbReference>
<dbReference type="SUPFAM" id="SSF47323">
    <property type="entry name" value="Anticodon-binding domain of a subclass of class I aminoacyl-tRNA synthetases"/>
    <property type="match status" value="1"/>
</dbReference>
<dbReference type="SUPFAM" id="SSF52374">
    <property type="entry name" value="Nucleotidylyl transferase"/>
    <property type="match status" value="1"/>
</dbReference>
<dbReference type="SUPFAM" id="SSF50677">
    <property type="entry name" value="ValRS/IleRS/LeuRS editing domain"/>
    <property type="match status" value="1"/>
</dbReference>
<dbReference type="PROSITE" id="PS00178">
    <property type="entry name" value="AA_TRNA_LIGASE_I"/>
    <property type="match status" value="1"/>
</dbReference>
<proteinExistence type="inferred from homology"/>
<evidence type="ECO:0000255" key="1">
    <source>
        <dbReference type="HAMAP-Rule" id="MF_00049"/>
    </source>
</evidence>
<feature type="chain" id="PRO_0000152128" description="Leucine--tRNA ligase">
    <location>
        <begin position="1"/>
        <end position="932"/>
    </location>
</feature>
<feature type="short sequence motif" description="'HIGH' region">
    <location>
        <begin position="38"/>
        <end position="48"/>
    </location>
</feature>
<feature type="short sequence motif" description="'KMSKS' region">
    <location>
        <begin position="630"/>
        <end position="634"/>
    </location>
</feature>
<feature type="binding site" evidence="1">
    <location>
        <position position="633"/>
    </location>
    <ligand>
        <name>ATP</name>
        <dbReference type="ChEBI" id="CHEBI:30616"/>
    </ligand>
</feature>